<reference key="1">
    <citation type="journal article" date="2006" name="J. Bacteriol.">
        <title>Whole-genome sequence of Listeria welshimeri reveals common steps in genome reduction with Listeria innocua as compared to Listeria monocytogenes.</title>
        <authorList>
            <person name="Hain T."/>
            <person name="Steinweg C."/>
            <person name="Kuenne C.T."/>
            <person name="Billion A."/>
            <person name="Ghai R."/>
            <person name="Chatterjee S.S."/>
            <person name="Domann E."/>
            <person name="Kaerst U."/>
            <person name="Goesmann A."/>
            <person name="Bekel T."/>
            <person name="Bartels D."/>
            <person name="Kaiser O."/>
            <person name="Meyer F."/>
            <person name="Puehler A."/>
            <person name="Weisshaar B."/>
            <person name="Wehland J."/>
            <person name="Liang C."/>
            <person name="Dandekar T."/>
            <person name="Lampidis R."/>
            <person name="Kreft J."/>
            <person name="Goebel W."/>
            <person name="Chakraborty T."/>
        </authorList>
    </citation>
    <scope>NUCLEOTIDE SEQUENCE [LARGE SCALE GENOMIC DNA]</scope>
    <source>
        <strain>ATCC 35897 / DSM 20650 / CCUG 15529 / CIP 8149 / NCTC 11857 / SLCC 5334 / V8</strain>
    </source>
</reference>
<evidence type="ECO:0000255" key="1">
    <source>
        <dbReference type="HAMAP-Rule" id="MF_00131"/>
    </source>
</evidence>
<accession>A0AJ79</accession>
<comment type="function">
    <text evidence="1">The alpha subunit is responsible for the aldol cleavage of indoleglycerol phosphate to indole and glyceraldehyde 3-phosphate.</text>
</comment>
<comment type="catalytic activity">
    <reaction evidence="1">
        <text>(1S,2R)-1-C-(indol-3-yl)glycerol 3-phosphate + L-serine = D-glyceraldehyde 3-phosphate + L-tryptophan + H2O</text>
        <dbReference type="Rhea" id="RHEA:10532"/>
        <dbReference type="ChEBI" id="CHEBI:15377"/>
        <dbReference type="ChEBI" id="CHEBI:33384"/>
        <dbReference type="ChEBI" id="CHEBI:57912"/>
        <dbReference type="ChEBI" id="CHEBI:58866"/>
        <dbReference type="ChEBI" id="CHEBI:59776"/>
        <dbReference type="EC" id="4.2.1.20"/>
    </reaction>
</comment>
<comment type="pathway">
    <text evidence="1">Amino-acid biosynthesis; L-tryptophan biosynthesis; L-tryptophan from chorismate: step 5/5.</text>
</comment>
<comment type="subunit">
    <text evidence="1">Tetramer of two alpha and two beta chains.</text>
</comment>
<comment type="similarity">
    <text evidence="1">Belongs to the TrpA family.</text>
</comment>
<keyword id="KW-0028">Amino-acid biosynthesis</keyword>
<keyword id="KW-0057">Aromatic amino acid biosynthesis</keyword>
<keyword id="KW-0456">Lyase</keyword>
<keyword id="KW-0822">Tryptophan biosynthesis</keyword>
<protein>
    <recommendedName>
        <fullName evidence="1">Tryptophan synthase alpha chain</fullName>
        <ecNumber evidence="1">4.2.1.20</ecNumber>
    </recommendedName>
</protein>
<sequence>MTKTLTKKISNKKHAAVVTYIMGGDGGLDNLEEQLLFLEKSGVSAIEIGIPFSDPVADGPIIQLAGLRALKKQVSLEAILNKLATSQVQIPLIIMSYINPIFHLGIPKFVEMVQKTPVKGLIIPDLPYEHQTLITPELEGTDIALIPLVSLTSPKERLKEIAKQAEGFIYAVTVNGTTGVRNKFDTHIDTHLAYLKSISPVPVLAGFGVSSIEHVEKFAHVCDGVIIGSKVVQMLHENKKAELGTFLQKAAEVRIEN</sequence>
<organism>
    <name type="scientific">Listeria welshimeri serovar 6b (strain ATCC 35897 / DSM 20650 / CCUG 15529 / CIP 8149 / NCTC 11857 / SLCC 5334 / V8)</name>
    <dbReference type="NCBI Taxonomy" id="386043"/>
    <lineage>
        <taxon>Bacteria</taxon>
        <taxon>Bacillati</taxon>
        <taxon>Bacillota</taxon>
        <taxon>Bacilli</taxon>
        <taxon>Bacillales</taxon>
        <taxon>Listeriaceae</taxon>
        <taxon>Listeria</taxon>
    </lineage>
</organism>
<name>TRPA_LISW6</name>
<feature type="chain" id="PRO_1000018225" description="Tryptophan synthase alpha chain">
    <location>
        <begin position="1"/>
        <end position="257"/>
    </location>
</feature>
<feature type="active site" description="Proton acceptor" evidence="1">
    <location>
        <position position="47"/>
    </location>
</feature>
<feature type="active site" description="Proton acceptor" evidence="1">
    <location>
        <position position="58"/>
    </location>
</feature>
<proteinExistence type="inferred from homology"/>
<dbReference type="EC" id="4.2.1.20" evidence="1"/>
<dbReference type="EMBL" id="AM263198">
    <property type="protein sequence ID" value="CAK21061.1"/>
    <property type="molecule type" value="Genomic_DNA"/>
</dbReference>
<dbReference type="RefSeq" id="WP_011702427.1">
    <property type="nucleotide sequence ID" value="NC_008555.1"/>
</dbReference>
<dbReference type="SMR" id="A0AJ79"/>
<dbReference type="STRING" id="386043.lwe1643"/>
<dbReference type="GeneID" id="61189519"/>
<dbReference type="KEGG" id="lwe:lwe1643"/>
<dbReference type="eggNOG" id="COG0159">
    <property type="taxonomic scope" value="Bacteria"/>
</dbReference>
<dbReference type="HOGENOM" id="CLU_016734_0_0_9"/>
<dbReference type="OrthoDB" id="9804578at2"/>
<dbReference type="UniPathway" id="UPA00035">
    <property type="reaction ID" value="UER00044"/>
</dbReference>
<dbReference type="Proteomes" id="UP000000779">
    <property type="component" value="Chromosome"/>
</dbReference>
<dbReference type="GO" id="GO:0005829">
    <property type="term" value="C:cytosol"/>
    <property type="evidence" value="ECO:0007669"/>
    <property type="project" value="TreeGrafter"/>
</dbReference>
<dbReference type="GO" id="GO:0004834">
    <property type="term" value="F:tryptophan synthase activity"/>
    <property type="evidence" value="ECO:0007669"/>
    <property type="project" value="UniProtKB-UniRule"/>
</dbReference>
<dbReference type="CDD" id="cd04724">
    <property type="entry name" value="Tryptophan_synthase_alpha"/>
    <property type="match status" value="1"/>
</dbReference>
<dbReference type="Gene3D" id="3.20.20.70">
    <property type="entry name" value="Aldolase class I"/>
    <property type="match status" value="1"/>
</dbReference>
<dbReference type="HAMAP" id="MF_00131">
    <property type="entry name" value="Trp_synth_alpha"/>
    <property type="match status" value="1"/>
</dbReference>
<dbReference type="InterPro" id="IPR013785">
    <property type="entry name" value="Aldolase_TIM"/>
</dbReference>
<dbReference type="InterPro" id="IPR011060">
    <property type="entry name" value="RibuloseP-bd_barrel"/>
</dbReference>
<dbReference type="InterPro" id="IPR018204">
    <property type="entry name" value="Trp_synthase_alpha_AS"/>
</dbReference>
<dbReference type="InterPro" id="IPR002028">
    <property type="entry name" value="Trp_synthase_suA"/>
</dbReference>
<dbReference type="NCBIfam" id="TIGR00262">
    <property type="entry name" value="trpA"/>
    <property type="match status" value="1"/>
</dbReference>
<dbReference type="PANTHER" id="PTHR43406:SF1">
    <property type="entry name" value="TRYPTOPHAN SYNTHASE ALPHA CHAIN, CHLOROPLASTIC"/>
    <property type="match status" value="1"/>
</dbReference>
<dbReference type="PANTHER" id="PTHR43406">
    <property type="entry name" value="TRYPTOPHAN SYNTHASE, ALPHA CHAIN"/>
    <property type="match status" value="1"/>
</dbReference>
<dbReference type="Pfam" id="PF00290">
    <property type="entry name" value="Trp_syntA"/>
    <property type="match status" value="1"/>
</dbReference>
<dbReference type="SUPFAM" id="SSF51366">
    <property type="entry name" value="Ribulose-phoshate binding barrel"/>
    <property type="match status" value="1"/>
</dbReference>
<dbReference type="PROSITE" id="PS00167">
    <property type="entry name" value="TRP_SYNTHASE_ALPHA"/>
    <property type="match status" value="1"/>
</dbReference>
<gene>
    <name evidence="1" type="primary">trpA</name>
    <name type="ordered locus">lwe1643</name>
</gene>